<keyword id="KW-0058">Aromatic hydrocarbons catabolism</keyword>
<keyword id="KW-0274">FAD</keyword>
<keyword id="KW-0285">Flavoprotein</keyword>
<keyword id="KW-0520">NAD</keyword>
<keyword id="KW-0560">Oxidoreductase</keyword>
<organism>
    <name type="scientific">Burkholderia cepacia</name>
    <name type="common">Pseudomonas cepacia</name>
    <dbReference type="NCBI Taxonomy" id="292"/>
    <lineage>
        <taxon>Bacteria</taxon>
        <taxon>Pseudomonadati</taxon>
        <taxon>Pseudomonadota</taxon>
        <taxon>Betaproteobacteria</taxon>
        <taxon>Burkholderiales</taxon>
        <taxon>Burkholderiaceae</taxon>
        <taxon>Burkholderia</taxon>
        <taxon>Burkholderia cepacia complex</taxon>
    </lineage>
</organism>
<name>ANDAA_BURCE</name>
<comment type="function">
    <text evidence="4">Part of the multicomponent anthranilate dioxygenase, that converts anthranilate to catechol. Probably transfers electrons from ferredoxin (AndAb) to NADH.</text>
</comment>
<comment type="catalytic activity">
    <reaction>
        <text>2 reduced [2Fe-2S]-[ferredoxin] + NAD(+) + H(+) = 2 oxidized [2Fe-2S]-[ferredoxin] + NADH</text>
        <dbReference type="Rhea" id="RHEA:16521"/>
        <dbReference type="Rhea" id="RHEA-COMP:10000"/>
        <dbReference type="Rhea" id="RHEA-COMP:10001"/>
        <dbReference type="ChEBI" id="CHEBI:15378"/>
        <dbReference type="ChEBI" id="CHEBI:33737"/>
        <dbReference type="ChEBI" id="CHEBI:33738"/>
        <dbReference type="ChEBI" id="CHEBI:57540"/>
        <dbReference type="ChEBI" id="CHEBI:57945"/>
        <dbReference type="EC" id="1.18.1.3"/>
    </reaction>
</comment>
<comment type="cofactor">
    <cofactor evidence="2">
        <name>FAD</name>
        <dbReference type="ChEBI" id="CHEBI:57692"/>
    </cofactor>
</comment>
<comment type="pathway">
    <text evidence="4">Aromatic compound metabolism; anthranilate degradation via hydroxylation; catechol from anthranilate: step 1/1.</text>
</comment>
<comment type="subunit">
    <text evidence="4">Part of a multicomponent enzyme system composed of a reductase (AndAa), a ferredoxin (AndAb) and a two-subunit oxygenase component (AndAc and AndAd).</text>
</comment>
<comment type="induction">
    <text evidence="4">Expression is positively regulated by the transcriptional regulator AndR.</text>
</comment>
<comment type="disruption phenotype">
    <text evidence="4">Cells lacking this gene are unable to grow on anthranilate.</text>
</comment>
<comment type="similarity">
    <text evidence="3">Belongs to the FAD-dependent oxidoreductase family.</text>
</comment>
<gene>
    <name evidence="6" type="primary">andAa</name>
</gene>
<feature type="chain" id="PRO_0000415160" description="Anthranilate 1,2-dioxygenase system ferredoxin--NAD(+) reductase component">
    <location>
        <begin position="1"/>
        <end position="406"/>
    </location>
</feature>
<feature type="binding site" evidence="2 3">
    <location>
        <begin position="5"/>
        <end position="37"/>
    </location>
    <ligand>
        <name>FAD</name>
        <dbReference type="ChEBI" id="CHEBI:57692"/>
    </ligand>
</feature>
<feature type="binding site" evidence="1 3">
    <location>
        <begin position="152"/>
        <end position="161"/>
    </location>
    <ligand>
        <name>NAD(+)</name>
        <dbReference type="ChEBI" id="CHEBI:57540"/>
    </ligand>
</feature>
<proteinExistence type="evidence at protein level"/>
<accession>Q84BZ0</accession>
<evidence type="ECO:0000250" key="1">
    <source>
        <dbReference type="UniProtKB" id="P16640"/>
    </source>
</evidence>
<evidence type="ECO:0000250" key="2">
    <source>
        <dbReference type="UniProtKB" id="P43494"/>
    </source>
</evidence>
<evidence type="ECO:0000255" key="3"/>
<evidence type="ECO:0000269" key="4">
    <source>
    </source>
</evidence>
<evidence type="ECO:0000305" key="5"/>
<evidence type="ECO:0000312" key="6">
    <source>
        <dbReference type="EMBL" id="AAO83642.1"/>
    </source>
</evidence>
<sequence>MSADPFVIVGAGHAARRTAEALRARDADAPIVMIGAERELPYDRPALSKDALLNDDGEQRAFVRDAAWYDAQRIALRLGTRVDAIEREAQRVRLDDGTTLPYAKLVLATGSRVRTFGGPIDAGVVAHYVRTVADARALRAQLVRGRRVAVLGGGFIGLEVAAAARQLGCNVTVIDPAARLLQRALPEVVGAYAHRLHDERGVGFQMATLPRAIRAAAGGGAIVETDRGDVHADVVVVGIGVLPNVELAQAAGLDVDNGIRVDAGCRTADRAIFAAGEVTMHFNPLLGRHVRIESWQVAENQPAVAAANLLGADDAYAELPWLWSDQYDCNLQMLGLFGAGQTTVVRGDPARGPFTVFGLGGDGRIVAAAAVNLGRDIGAARRLIAAGAMPDPQQLADPTVGLKTFL</sequence>
<reference evidence="5 6" key="1">
    <citation type="journal article" date="2003" name="J. Bacteriol.">
        <title>Characterization and regulation of the genes for a novel anthranilate 1,2-dioxygenase from Burkholderia cepacia DBO1.</title>
        <authorList>
            <person name="Chang H.K."/>
            <person name="Mohseni P."/>
            <person name="Zylstra G.J."/>
        </authorList>
    </citation>
    <scope>NUCLEOTIDE SEQUENCE [GENOMIC DNA]</scope>
    <scope>FUNCTION</scope>
    <scope>PATHWAY</scope>
    <scope>SUBUNIT</scope>
    <scope>INDUCTION</scope>
    <scope>DISRUPTION PHENOTYPE</scope>
    <source>
        <strain evidence="6">ATCC 29424 / DBO1</strain>
    </source>
</reference>
<protein>
    <recommendedName>
        <fullName>Anthranilate 1,2-dioxygenase system ferredoxin--NAD(+) reductase component</fullName>
        <ecNumber>1.18.1.3</ecNumber>
    </recommendedName>
</protein>
<dbReference type="EC" id="1.18.1.3"/>
<dbReference type="EMBL" id="AY223539">
    <property type="protein sequence ID" value="AAO83642.1"/>
    <property type="molecule type" value="Genomic_DNA"/>
</dbReference>
<dbReference type="SMR" id="Q84BZ0"/>
<dbReference type="STRING" id="292.WI67_21090"/>
<dbReference type="KEGG" id="ag:AAO83642"/>
<dbReference type="BioCyc" id="MetaCyc:MONOMER-7526"/>
<dbReference type="UniPathway" id="UPA01016">
    <property type="reaction ID" value="UER01026"/>
</dbReference>
<dbReference type="GO" id="GO:0005737">
    <property type="term" value="C:cytoplasm"/>
    <property type="evidence" value="ECO:0007669"/>
    <property type="project" value="TreeGrafter"/>
</dbReference>
<dbReference type="GO" id="GO:0008860">
    <property type="term" value="F:ferredoxin-NAD+ reductase activity"/>
    <property type="evidence" value="ECO:0007669"/>
    <property type="project" value="UniProtKB-EC"/>
</dbReference>
<dbReference type="GO" id="GO:0016651">
    <property type="term" value="F:oxidoreductase activity, acting on NAD(P)H"/>
    <property type="evidence" value="ECO:0007669"/>
    <property type="project" value="TreeGrafter"/>
</dbReference>
<dbReference type="GO" id="GO:0009056">
    <property type="term" value="P:catabolic process"/>
    <property type="evidence" value="ECO:0007669"/>
    <property type="project" value="UniProtKB-KW"/>
</dbReference>
<dbReference type="Gene3D" id="3.30.390.30">
    <property type="match status" value="1"/>
</dbReference>
<dbReference type="Gene3D" id="3.50.50.60">
    <property type="entry name" value="FAD/NAD(P)-binding domain"/>
    <property type="match status" value="2"/>
</dbReference>
<dbReference type="InterPro" id="IPR049657">
    <property type="entry name" value="AndAa"/>
</dbReference>
<dbReference type="InterPro" id="IPR050446">
    <property type="entry name" value="FAD-oxidoreductase/Apoptosis"/>
</dbReference>
<dbReference type="InterPro" id="IPR036188">
    <property type="entry name" value="FAD/NAD-bd_sf"/>
</dbReference>
<dbReference type="InterPro" id="IPR023753">
    <property type="entry name" value="FAD/NAD-binding_dom"/>
</dbReference>
<dbReference type="InterPro" id="IPR016156">
    <property type="entry name" value="FAD/NAD-linked_Rdtase_dimer_sf"/>
</dbReference>
<dbReference type="InterPro" id="IPR028202">
    <property type="entry name" value="Reductase_C"/>
</dbReference>
<dbReference type="NCBIfam" id="NF041682">
    <property type="entry name" value="ant_diox_AndAa"/>
    <property type="match status" value="1"/>
</dbReference>
<dbReference type="PANTHER" id="PTHR43557">
    <property type="entry name" value="APOPTOSIS-INDUCING FACTOR 1"/>
    <property type="match status" value="1"/>
</dbReference>
<dbReference type="PANTHER" id="PTHR43557:SF2">
    <property type="entry name" value="RIESKE DOMAIN-CONTAINING PROTEIN-RELATED"/>
    <property type="match status" value="1"/>
</dbReference>
<dbReference type="Pfam" id="PF07992">
    <property type="entry name" value="Pyr_redox_2"/>
    <property type="match status" value="1"/>
</dbReference>
<dbReference type="Pfam" id="PF14759">
    <property type="entry name" value="Reductase_C"/>
    <property type="match status" value="1"/>
</dbReference>
<dbReference type="PRINTS" id="PR00368">
    <property type="entry name" value="FADPNR"/>
</dbReference>
<dbReference type="PRINTS" id="PR00411">
    <property type="entry name" value="PNDRDTASEI"/>
</dbReference>
<dbReference type="SUPFAM" id="SSF51905">
    <property type="entry name" value="FAD/NAD(P)-binding domain"/>
    <property type="match status" value="2"/>
</dbReference>
<dbReference type="SUPFAM" id="SSF55424">
    <property type="entry name" value="FAD/NAD-linked reductases, dimerisation (C-terminal) domain"/>
    <property type="match status" value="1"/>
</dbReference>